<accession>J9VX38</accession>
<comment type="function">
    <text evidence="5 7">Probable phosphatase (Probable). Required for cell wall integrity and virulence (PubMed:29233914).</text>
</comment>
<comment type="PTM">
    <text evidence="4">Phosphorylated.</text>
</comment>
<comment type="disruption phenotype">
    <text evidence="5">Decreases virulence in mouse intranasal and intravenous model for infection (PubMed:29233914). Sensitive to: high temperature; sodium dodecyl sulfate (cell wall stress inducer); Congo Red (cell wall stress inducer); dithiothreitol; Calcofluor White; salt stress (induced by KCl) (PubMed:29233914). Simultaneous disruption of CRZ1 results in phenotypic enhancement (PubMed:29233914).</text>
</comment>
<comment type="similarity">
    <text evidence="7">Belongs to the HAD-like hydrolase superfamily.</text>
</comment>
<evidence type="ECO:0000250" key="1">
    <source>
        <dbReference type="UniProtKB" id="P60487"/>
    </source>
</evidence>
<evidence type="ECO:0000250" key="2">
    <source>
        <dbReference type="UniProtKB" id="Q96GD0"/>
    </source>
</evidence>
<evidence type="ECO:0000256" key="3">
    <source>
        <dbReference type="SAM" id="MobiDB-lite"/>
    </source>
</evidence>
<evidence type="ECO:0000269" key="4">
    <source>
    </source>
</evidence>
<evidence type="ECO:0000269" key="5">
    <source>
    </source>
</evidence>
<evidence type="ECO:0000303" key="6">
    <source>
    </source>
</evidence>
<evidence type="ECO:0000305" key="7"/>
<evidence type="ECO:0000312" key="8">
    <source>
        <dbReference type="EMBL" id="AFR97946.1"/>
    </source>
</evidence>
<evidence type="ECO:0000312" key="9">
    <source>
        <dbReference type="Proteomes" id="UP000010091"/>
    </source>
</evidence>
<dbReference type="EC" id="3.1.3.-" evidence="7"/>
<dbReference type="EMBL" id="CP003830">
    <property type="protein sequence ID" value="AFR97946.1"/>
    <property type="molecule type" value="Genomic_DNA"/>
</dbReference>
<dbReference type="RefSeq" id="XP_012052729.1">
    <property type="nucleotide sequence ID" value="XM_012197339.1"/>
</dbReference>
<dbReference type="SMR" id="J9VX38"/>
<dbReference type="GeneID" id="23885433"/>
<dbReference type="KEGG" id="cng:CNAG_01744"/>
<dbReference type="VEuPathDB" id="FungiDB:CNAG_01744"/>
<dbReference type="HOGENOM" id="CLU_669051_0_0_1"/>
<dbReference type="OrthoDB" id="2737at5206"/>
<dbReference type="PHI-base" id="PHI:7867"/>
<dbReference type="PHI-base" id="PHI:9900"/>
<dbReference type="Proteomes" id="UP000010091">
    <property type="component" value="Chromosome 11"/>
</dbReference>
<dbReference type="GO" id="GO:0046872">
    <property type="term" value="F:metal ion binding"/>
    <property type="evidence" value="ECO:0007669"/>
    <property type="project" value="UniProtKB-KW"/>
</dbReference>
<dbReference type="GO" id="GO:0050308">
    <property type="term" value="F:sugar-phosphatase activity"/>
    <property type="evidence" value="ECO:0007669"/>
    <property type="project" value="TreeGrafter"/>
</dbReference>
<dbReference type="Gene3D" id="3.40.50.1000">
    <property type="entry name" value="HAD superfamily/HAD-like"/>
    <property type="match status" value="1"/>
</dbReference>
<dbReference type="Gene3D" id="1.10.150.240">
    <property type="entry name" value="Putative phosphatase, domain 2"/>
    <property type="match status" value="1"/>
</dbReference>
<dbReference type="InterPro" id="IPR036412">
    <property type="entry name" value="HAD-like_sf"/>
</dbReference>
<dbReference type="InterPro" id="IPR051806">
    <property type="entry name" value="HAD-like_SPP"/>
</dbReference>
<dbReference type="InterPro" id="IPR023214">
    <property type="entry name" value="HAD_sf"/>
</dbReference>
<dbReference type="InterPro" id="IPR023198">
    <property type="entry name" value="PGP-like_dom2"/>
</dbReference>
<dbReference type="PANTHER" id="PTHR43481">
    <property type="entry name" value="FRUCTOSE-1-PHOSPHATE PHOSPHATASE"/>
    <property type="match status" value="1"/>
</dbReference>
<dbReference type="PANTHER" id="PTHR43481:SF4">
    <property type="entry name" value="GLYCEROL-1-PHOSPHATE PHOSPHOHYDROLASE 1-RELATED"/>
    <property type="match status" value="1"/>
</dbReference>
<dbReference type="Pfam" id="PF00702">
    <property type="entry name" value="Hydrolase"/>
    <property type="match status" value="1"/>
</dbReference>
<dbReference type="SFLD" id="SFLDG01129">
    <property type="entry name" value="C1.5:_HAD__Beta-PGM__Phosphata"/>
    <property type="match status" value="1"/>
</dbReference>
<dbReference type="SFLD" id="SFLDS00003">
    <property type="entry name" value="Haloacid_Dehalogenase"/>
    <property type="match status" value="1"/>
</dbReference>
<dbReference type="SUPFAM" id="SSF56784">
    <property type="entry name" value="HAD-like"/>
    <property type="match status" value="1"/>
</dbReference>
<protein>
    <recommendedName>
        <fullName evidence="6">Probable phosphatase HAD1</fullName>
        <ecNumber evidence="7">3.1.3.-</ecNumber>
    </recommendedName>
</protein>
<sequence length="411" mass="43933">MSVFTKSAFTMSALPSPNTSQPPSAAPSRRGSFANGLASGQLTPVTDPHIVSINVESVLFDMDGTLINSSPAVVKAWELFAEKYPLDLDDILRSAHGMRTIDVLKKWCKITDPELLASEVIRFETAILNSAEDIAKHSGKAGIEVLPGVAKLLADLGEEADKRDGEEKWAICTSSTYFYAGKAIPIAGLPTPKVFVTADSVTRGKPFPDPYLLGASGCNASPFESLVVEDAPTGIRSGKASGALVLATCTSHEREELERERPDFLVDDLSHVKASWDAATNTFNLIIEQPIDRYTPRPTPDVTPVITPAMSRSNSFSGVGQDRPSVRNTQTIMKGSDDLTGNDSVVGSPAASRPGSPGADDSVEKRAEMEFHRRASQSGQAGVTLDAFRRALAGNAAKRRAQSQGEMSQDE</sequence>
<reference evidence="9" key="1">
    <citation type="journal article" date="2014" name="PLoS Genet.">
        <title>Analysis of the genome and transcriptome of Cryptococcus neoformans var. grubii reveals complex RNA expression and microevolution leading to virulence attenuation.</title>
        <authorList>
            <person name="Janbon G."/>
            <person name="Ormerod K.L."/>
            <person name="Paulet D."/>
            <person name="Byrnes E.J. III"/>
            <person name="Yadav V."/>
            <person name="Chatterjee G."/>
            <person name="Mullapudi N."/>
            <person name="Hon C.-C."/>
            <person name="Billmyre R.B."/>
            <person name="Brunel F."/>
            <person name="Bahn Y.-S."/>
            <person name="Chen W."/>
            <person name="Chen Y."/>
            <person name="Chow E.W.L."/>
            <person name="Coppee J.-Y."/>
            <person name="Floyd-Averette A."/>
            <person name="Gaillardin C."/>
            <person name="Gerik K.J."/>
            <person name="Goldberg J."/>
            <person name="Gonzalez-Hilarion S."/>
            <person name="Gujja S."/>
            <person name="Hamlin J.L."/>
            <person name="Hsueh Y.-P."/>
            <person name="Ianiri G."/>
            <person name="Jones S."/>
            <person name="Kodira C.D."/>
            <person name="Kozubowski L."/>
            <person name="Lam W."/>
            <person name="Marra M."/>
            <person name="Mesner L.D."/>
            <person name="Mieczkowski P.A."/>
            <person name="Moyrand F."/>
            <person name="Nielsen K."/>
            <person name="Proux C."/>
            <person name="Rossignol T."/>
            <person name="Schein J.E."/>
            <person name="Sun S."/>
            <person name="Wollschlaeger C."/>
            <person name="Wood I.A."/>
            <person name="Zeng Q."/>
            <person name="Neuveglise C."/>
            <person name="Newlon C.S."/>
            <person name="Perfect J.R."/>
            <person name="Lodge J.K."/>
            <person name="Idnurm A."/>
            <person name="Stajich J.E."/>
            <person name="Kronstad J.W."/>
            <person name="Sanyal K."/>
            <person name="Heitman J."/>
            <person name="Fraser J.A."/>
            <person name="Cuomo C.A."/>
            <person name="Dietrich F.S."/>
        </authorList>
    </citation>
    <scope>NUCLEOTIDE SEQUENCE [LARGE SCALE GENOMIC DNA]</scope>
    <source>
        <strain>H99 / ATCC 208821 / CBS 10515 / FGSC 9487</strain>
    </source>
</reference>
<reference evidence="7" key="2">
    <citation type="journal article" date="2016" name="PLoS Pathog.">
        <title>Calcineurin Targets Involved in Stress Survival and Fungal Virulence.</title>
        <authorList>
            <person name="Park H.S."/>
            <person name="Chow E.W."/>
            <person name="Fu C."/>
            <person name="Soderblom E.J."/>
            <person name="Moseley M.A."/>
            <person name="Heitman J."/>
            <person name="Cardenas M.E."/>
        </authorList>
    </citation>
    <scope>PHOSPHORYLATION</scope>
    <scope>IDENTIFICATION BY MASS SPECTROMETRY</scope>
</reference>
<reference evidence="7" key="3">
    <citation type="journal article" date="2018" name="G3 (Bethesda)">
        <title>Had1 Is Required for Cell Wall Integrity and Fungal Virulence in Cryptococcus neoformans.</title>
        <authorList>
            <person name="Jung W.H."/>
            <person name="Son Y.E."/>
            <person name="Oh S.H."/>
            <person name="Fu C."/>
            <person name="Kim H.S."/>
            <person name="Kwak J.H."/>
            <person name="Cardenas M.E."/>
            <person name="Heitman J."/>
            <person name="Park H.S."/>
        </authorList>
    </citation>
    <scope>FUNCTION</scope>
    <scope>DISRUPTION PHENOTYPE</scope>
</reference>
<gene>
    <name evidence="6" type="primary">HAD1</name>
    <name evidence="8" type="ORF">CNAG_01744</name>
</gene>
<keyword id="KW-0378">Hydrolase</keyword>
<keyword id="KW-0460">Magnesium</keyword>
<keyword id="KW-0479">Metal-binding</keyword>
<keyword id="KW-0597">Phosphoprotein</keyword>
<keyword id="KW-0843">Virulence</keyword>
<proteinExistence type="evidence at protein level"/>
<name>HAD1_CRYNH</name>
<feature type="chain" id="PRO_0000451403" description="Probable phosphatase HAD1">
    <location>
        <begin position="1"/>
        <end position="411"/>
    </location>
</feature>
<feature type="region of interest" description="Disordered" evidence="3">
    <location>
        <begin position="14"/>
        <end position="33"/>
    </location>
</feature>
<feature type="region of interest" description="Disordered" evidence="3">
    <location>
        <begin position="296"/>
        <end position="386"/>
    </location>
</feature>
<feature type="compositionally biased region" description="Polar residues" evidence="3">
    <location>
        <begin position="14"/>
        <end position="23"/>
    </location>
</feature>
<feature type="compositionally biased region" description="Polar residues" evidence="3">
    <location>
        <begin position="326"/>
        <end position="345"/>
    </location>
</feature>
<feature type="compositionally biased region" description="Basic and acidic residues" evidence="3">
    <location>
        <begin position="362"/>
        <end position="373"/>
    </location>
</feature>
<feature type="active site" description="Nucleophile" evidence="2">
    <location>
        <position position="61"/>
    </location>
</feature>
<feature type="active site" description="Proton donor" evidence="2">
    <location>
        <position position="63"/>
    </location>
</feature>
<feature type="binding site" evidence="1">
    <location>
        <position position="61"/>
    </location>
    <ligand>
        <name>Mg(2+)</name>
        <dbReference type="ChEBI" id="CHEBI:18420"/>
    </ligand>
</feature>
<feature type="binding site" evidence="1">
    <location>
        <position position="63"/>
    </location>
    <ligand>
        <name>Mg(2+)</name>
        <dbReference type="ChEBI" id="CHEBI:18420"/>
    </ligand>
</feature>
<feature type="binding site" evidence="1">
    <location>
        <position position="338"/>
    </location>
    <ligand>
        <name>Mg(2+)</name>
        <dbReference type="ChEBI" id="CHEBI:18420"/>
    </ligand>
</feature>
<organism evidence="9">
    <name type="scientific">Cryptococcus neoformans var. grubii serotype A (strain H99 / ATCC 208821 / CBS 10515 / FGSC 9487)</name>
    <name type="common">Filobasidiella neoformans var. grubii</name>
    <dbReference type="NCBI Taxonomy" id="235443"/>
    <lineage>
        <taxon>Eukaryota</taxon>
        <taxon>Fungi</taxon>
        <taxon>Dikarya</taxon>
        <taxon>Basidiomycota</taxon>
        <taxon>Agaricomycotina</taxon>
        <taxon>Tremellomycetes</taxon>
        <taxon>Tremellales</taxon>
        <taxon>Cryptococcaceae</taxon>
        <taxon>Cryptococcus</taxon>
        <taxon>Cryptococcus neoformans species complex</taxon>
    </lineage>
</organism>